<name>RS3_XANOM</name>
<keyword id="KW-0687">Ribonucleoprotein</keyword>
<keyword id="KW-0689">Ribosomal protein</keyword>
<keyword id="KW-0694">RNA-binding</keyword>
<keyword id="KW-0699">rRNA-binding</keyword>
<protein>
    <recommendedName>
        <fullName evidence="1">Small ribosomal subunit protein uS3</fullName>
    </recommendedName>
    <alternativeName>
        <fullName evidence="3">30S ribosomal protein S3</fullName>
    </alternativeName>
</protein>
<dbReference type="EMBL" id="AP008229">
    <property type="protein sequence ID" value="BAE70136.1"/>
    <property type="molecule type" value="Genomic_DNA"/>
</dbReference>
<dbReference type="RefSeq" id="WP_005993372.1">
    <property type="nucleotide sequence ID" value="NC_007705.1"/>
</dbReference>
<dbReference type="SMR" id="Q2NZZ1"/>
<dbReference type="GeneID" id="97210510"/>
<dbReference type="KEGG" id="xom:XOO3381"/>
<dbReference type="HOGENOM" id="CLU_058591_0_2_6"/>
<dbReference type="GO" id="GO:0022627">
    <property type="term" value="C:cytosolic small ribosomal subunit"/>
    <property type="evidence" value="ECO:0007669"/>
    <property type="project" value="TreeGrafter"/>
</dbReference>
<dbReference type="GO" id="GO:0003729">
    <property type="term" value="F:mRNA binding"/>
    <property type="evidence" value="ECO:0007669"/>
    <property type="project" value="UniProtKB-UniRule"/>
</dbReference>
<dbReference type="GO" id="GO:0019843">
    <property type="term" value="F:rRNA binding"/>
    <property type="evidence" value="ECO:0007669"/>
    <property type="project" value="UniProtKB-UniRule"/>
</dbReference>
<dbReference type="GO" id="GO:0003735">
    <property type="term" value="F:structural constituent of ribosome"/>
    <property type="evidence" value="ECO:0007669"/>
    <property type="project" value="InterPro"/>
</dbReference>
<dbReference type="GO" id="GO:0006412">
    <property type="term" value="P:translation"/>
    <property type="evidence" value="ECO:0007669"/>
    <property type="project" value="UniProtKB-UniRule"/>
</dbReference>
<dbReference type="CDD" id="cd02412">
    <property type="entry name" value="KH-II_30S_S3"/>
    <property type="match status" value="1"/>
</dbReference>
<dbReference type="FunFam" id="3.30.1140.32:FF:000001">
    <property type="entry name" value="30S ribosomal protein S3"/>
    <property type="match status" value="1"/>
</dbReference>
<dbReference type="FunFam" id="3.30.300.20:FF:000001">
    <property type="entry name" value="30S ribosomal protein S3"/>
    <property type="match status" value="1"/>
</dbReference>
<dbReference type="Gene3D" id="3.30.300.20">
    <property type="match status" value="1"/>
</dbReference>
<dbReference type="Gene3D" id="3.30.1140.32">
    <property type="entry name" value="Ribosomal protein S3, C-terminal domain"/>
    <property type="match status" value="1"/>
</dbReference>
<dbReference type="HAMAP" id="MF_01309_B">
    <property type="entry name" value="Ribosomal_uS3_B"/>
    <property type="match status" value="1"/>
</dbReference>
<dbReference type="InterPro" id="IPR004087">
    <property type="entry name" value="KH_dom"/>
</dbReference>
<dbReference type="InterPro" id="IPR015946">
    <property type="entry name" value="KH_dom-like_a/b"/>
</dbReference>
<dbReference type="InterPro" id="IPR004044">
    <property type="entry name" value="KH_dom_type_2"/>
</dbReference>
<dbReference type="InterPro" id="IPR009019">
    <property type="entry name" value="KH_sf_prok-type"/>
</dbReference>
<dbReference type="InterPro" id="IPR036419">
    <property type="entry name" value="Ribosomal_S3_C_sf"/>
</dbReference>
<dbReference type="InterPro" id="IPR005704">
    <property type="entry name" value="Ribosomal_uS3_bac-typ"/>
</dbReference>
<dbReference type="InterPro" id="IPR001351">
    <property type="entry name" value="Ribosomal_uS3_C"/>
</dbReference>
<dbReference type="InterPro" id="IPR018280">
    <property type="entry name" value="Ribosomal_uS3_CS"/>
</dbReference>
<dbReference type="NCBIfam" id="TIGR01009">
    <property type="entry name" value="rpsC_bact"/>
    <property type="match status" value="1"/>
</dbReference>
<dbReference type="PANTHER" id="PTHR11760">
    <property type="entry name" value="30S/40S RIBOSOMAL PROTEIN S3"/>
    <property type="match status" value="1"/>
</dbReference>
<dbReference type="PANTHER" id="PTHR11760:SF19">
    <property type="entry name" value="SMALL RIBOSOMAL SUBUNIT PROTEIN US3C"/>
    <property type="match status" value="1"/>
</dbReference>
<dbReference type="Pfam" id="PF07650">
    <property type="entry name" value="KH_2"/>
    <property type="match status" value="1"/>
</dbReference>
<dbReference type="Pfam" id="PF00189">
    <property type="entry name" value="Ribosomal_S3_C"/>
    <property type="match status" value="1"/>
</dbReference>
<dbReference type="SMART" id="SM00322">
    <property type="entry name" value="KH"/>
    <property type="match status" value="1"/>
</dbReference>
<dbReference type="SUPFAM" id="SSF54814">
    <property type="entry name" value="Prokaryotic type KH domain (KH-domain type II)"/>
    <property type="match status" value="1"/>
</dbReference>
<dbReference type="SUPFAM" id="SSF54821">
    <property type="entry name" value="Ribosomal protein S3 C-terminal domain"/>
    <property type="match status" value="1"/>
</dbReference>
<dbReference type="PROSITE" id="PS50823">
    <property type="entry name" value="KH_TYPE_2"/>
    <property type="match status" value="1"/>
</dbReference>
<dbReference type="PROSITE" id="PS00548">
    <property type="entry name" value="RIBOSOMAL_S3"/>
    <property type="match status" value="1"/>
</dbReference>
<accession>Q2NZZ1</accession>
<organism>
    <name type="scientific">Xanthomonas oryzae pv. oryzae (strain MAFF 311018)</name>
    <dbReference type="NCBI Taxonomy" id="342109"/>
    <lineage>
        <taxon>Bacteria</taxon>
        <taxon>Pseudomonadati</taxon>
        <taxon>Pseudomonadota</taxon>
        <taxon>Gammaproteobacteria</taxon>
        <taxon>Lysobacterales</taxon>
        <taxon>Lysobacteraceae</taxon>
        <taxon>Xanthomonas</taxon>
    </lineage>
</organism>
<reference key="1">
    <citation type="journal article" date="2005" name="Jpn. Agric. Res. Q.">
        <title>Genome sequence of Xanthomonas oryzae pv. oryzae suggests contribution of large numbers of effector genes and insertion sequences to its race diversity.</title>
        <authorList>
            <person name="Ochiai H."/>
            <person name="Inoue Y."/>
            <person name="Takeya M."/>
            <person name="Sasaki A."/>
            <person name="Kaku H."/>
        </authorList>
    </citation>
    <scope>NUCLEOTIDE SEQUENCE [LARGE SCALE GENOMIC DNA]</scope>
    <source>
        <strain>MAFF 311018</strain>
    </source>
</reference>
<comment type="function">
    <text evidence="1">Binds the lower part of the 30S subunit head. Binds mRNA in the 70S ribosome, positioning it for translation.</text>
</comment>
<comment type="subunit">
    <text evidence="1">Part of the 30S ribosomal subunit. Forms a tight complex with proteins S10 and S14.</text>
</comment>
<comment type="similarity">
    <text evidence="1">Belongs to the universal ribosomal protein uS3 family.</text>
</comment>
<feature type="chain" id="PRO_0000293914" description="Small ribosomal subunit protein uS3">
    <location>
        <begin position="1"/>
        <end position="244"/>
    </location>
</feature>
<feature type="domain" description="KH type-2" evidence="1">
    <location>
        <begin position="39"/>
        <end position="107"/>
    </location>
</feature>
<feature type="region of interest" description="Disordered" evidence="2">
    <location>
        <begin position="213"/>
        <end position="244"/>
    </location>
</feature>
<feature type="compositionally biased region" description="Basic and acidic residues" evidence="2">
    <location>
        <begin position="216"/>
        <end position="244"/>
    </location>
</feature>
<evidence type="ECO:0000255" key="1">
    <source>
        <dbReference type="HAMAP-Rule" id="MF_01309"/>
    </source>
</evidence>
<evidence type="ECO:0000256" key="2">
    <source>
        <dbReference type="SAM" id="MobiDB-lite"/>
    </source>
</evidence>
<evidence type="ECO:0000305" key="3"/>
<proteinExistence type="inferred from homology"/>
<sequence length="244" mass="27439">MGHKVHPTGIRLGISKDWNSKWYANKGDFAAYLAADLKVREMLRKKLAQAGVSKILIERPAKTARVTIHTARPGVVIGKRGEDIEKLRKEVSELMGVPAHINVTEVRKPELDAQLVAESIAQQLERRIMFRRAMKRSVGNAMRLGALGIKVNVAGRLNGAEIARSEWYREGRVPLHTLRADIDYGFAEASTTYGIIGIKVWIYKGEVFDFSQVGQEKQDDSPRNDRNDRGDRGDRPSRPAREAR</sequence>
<gene>
    <name evidence="1" type="primary">rpsC</name>
    <name type="ordered locus">XOO3381</name>
</gene>